<reference key="1">
    <citation type="journal article" date="2007" name="Nature">
        <title>Evolution of genes and genomes on the Drosophila phylogeny.</title>
        <authorList>
            <consortium name="Drosophila 12 genomes consortium"/>
        </authorList>
    </citation>
    <scope>NUCLEOTIDE SEQUENCE [LARGE SCALE GENOMIC DNA]</scope>
    <source>
        <strain>Tucson 15081-1352.22</strain>
    </source>
</reference>
<protein>
    <recommendedName>
        <fullName>Phosphotriesterase-related protein</fullName>
        <ecNumber>3.1.-.-</ecNumber>
    </recommendedName>
    <alternativeName>
        <fullName>Parathion hydrolase-related protein</fullName>
    </alternativeName>
</protein>
<proteinExistence type="inferred from homology"/>
<organism>
    <name type="scientific">Drosophila mojavensis</name>
    <name type="common">Fruit fly</name>
    <dbReference type="NCBI Taxonomy" id="7230"/>
    <lineage>
        <taxon>Eukaryota</taxon>
        <taxon>Metazoa</taxon>
        <taxon>Ecdysozoa</taxon>
        <taxon>Arthropoda</taxon>
        <taxon>Hexapoda</taxon>
        <taxon>Insecta</taxon>
        <taxon>Pterygota</taxon>
        <taxon>Neoptera</taxon>
        <taxon>Endopterygota</taxon>
        <taxon>Diptera</taxon>
        <taxon>Brachycera</taxon>
        <taxon>Muscomorpha</taxon>
        <taxon>Ephydroidea</taxon>
        <taxon>Drosophilidae</taxon>
        <taxon>Drosophila</taxon>
    </lineage>
</organism>
<dbReference type="EC" id="3.1.-.-"/>
<dbReference type="EMBL" id="CH933806">
    <property type="protein sequence ID" value="EDW13957.1"/>
    <property type="molecule type" value="Genomic_DNA"/>
</dbReference>
<dbReference type="SMR" id="B4K4Y6"/>
<dbReference type="FunCoup" id="B4K4Y6">
    <property type="interactions" value="3"/>
</dbReference>
<dbReference type="EnsemblMetazoa" id="FBtr0174728">
    <property type="protein sequence ID" value="FBpp0173220"/>
    <property type="gene ID" value="FBgn0146726"/>
</dbReference>
<dbReference type="EnsemblMetazoa" id="XM_001998460.4">
    <property type="protein sequence ID" value="XP_001998496.1"/>
    <property type="gene ID" value="LOC6572387"/>
</dbReference>
<dbReference type="GeneID" id="6572387"/>
<dbReference type="KEGG" id="dmo:Dmoj_GI24003"/>
<dbReference type="eggNOG" id="ENOG502QQQR">
    <property type="taxonomic scope" value="Eukaryota"/>
</dbReference>
<dbReference type="HOGENOM" id="CLU_054760_0_1_1"/>
<dbReference type="InParanoid" id="B4K4Y6"/>
<dbReference type="OMA" id="MVKCGFI"/>
<dbReference type="OrthoDB" id="9998343at2759"/>
<dbReference type="PhylomeDB" id="B4K4Y6"/>
<dbReference type="Proteomes" id="UP000009192">
    <property type="component" value="Unassembled WGS sequence"/>
</dbReference>
<dbReference type="GO" id="GO:0016788">
    <property type="term" value="F:hydrolase activity, acting on ester bonds"/>
    <property type="evidence" value="ECO:0007669"/>
    <property type="project" value="InterPro"/>
</dbReference>
<dbReference type="GO" id="GO:0008270">
    <property type="term" value="F:zinc ion binding"/>
    <property type="evidence" value="ECO:0007669"/>
    <property type="project" value="InterPro"/>
</dbReference>
<dbReference type="GO" id="GO:0009056">
    <property type="term" value="P:catabolic process"/>
    <property type="evidence" value="ECO:0007669"/>
    <property type="project" value="InterPro"/>
</dbReference>
<dbReference type="CDD" id="cd00530">
    <property type="entry name" value="PTE"/>
    <property type="match status" value="1"/>
</dbReference>
<dbReference type="Gene3D" id="3.20.20.140">
    <property type="entry name" value="Metal-dependent hydrolases"/>
    <property type="match status" value="1"/>
</dbReference>
<dbReference type="InterPro" id="IPR017947">
    <property type="entry name" value="AryldialkylPase_Zn-BS"/>
</dbReference>
<dbReference type="InterPro" id="IPR032466">
    <property type="entry name" value="Metal_Hydrolase"/>
</dbReference>
<dbReference type="InterPro" id="IPR001559">
    <property type="entry name" value="Phosphotriesterase"/>
</dbReference>
<dbReference type="PANTHER" id="PTHR10819">
    <property type="entry name" value="PHOSPHOTRIESTERASE-RELATED"/>
    <property type="match status" value="1"/>
</dbReference>
<dbReference type="PANTHER" id="PTHR10819:SF3">
    <property type="entry name" value="PHOSPHOTRIESTERASE-RELATED PROTEIN"/>
    <property type="match status" value="1"/>
</dbReference>
<dbReference type="Pfam" id="PF02126">
    <property type="entry name" value="PTE"/>
    <property type="match status" value="1"/>
</dbReference>
<dbReference type="SUPFAM" id="SSF51556">
    <property type="entry name" value="Metallo-dependent hydrolases"/>
    <property type="match status" value="1"/>
</dbReference>
<dbReference type="PROSITE" id="PS01322">
    <property type="entry name" value="PHOSPHOTRIESTERASE_1"/>
    <property type="match status" value="1"/>
</dbReference>
<dbReference type="PROSITE" id="PS51347">
    <property type="entry name" value="PHOSPHOTRIESTERASE_2"/>
    <property type="match status" value="1"/>
</dbReference>
<gene>
    <name type="ORF">GI24003</name>
</gene>
<comment type="cofactor">
    <cofactor evidence="1">
        <name>a divalent metal cation</name>
        <dbReference type="ChEBI" id="CHEBI:60240"/>
    </cofactor>
    <text evidence="1">Binds 2 divalent metal cations per subunit.</text>
</comment>
<comment type="similarity">
    <text evidence="2">Belongs to the metallo-dependent hydrolases superfamily. Phosphotriesterase family.</text>
</comment>
<evidence type="ECO:0000250" key="1">
    <source>
        <dbReference type="UniProtKB" id="P45548"/>
    </source>
</evidence>
<evidence type="ECO:0000255" key="2">
    <source>
        <dbReference type="PROSITE-ProRule" id="PRU00679"/>
    </source>
</evidence>
<accession>B4K4Y6</accession>
<name>PTER_DROMO</name>
<keyword id="KW-0378">Hydrolase</keyword>
<keyword id="KW-0479">Metal-binding</keyword>
<keyword id="KW-1185">Reference proteome</keyword>
<feature type="chain" id="PRO_0000388676" description="Phosphotriesterase-related protein">
    <location>
        <begin position="1"/>
        <end position="350"/>
    </location>
</feature>
<feature type="binding site" evidence="1">
    <location>
        <position position="22"/>
    </location>
    <ligand>
        <name>a divalent metal cation</name>
        <dbReference type="ChEBI" id="CHEBI:60240"/>
        <label>1</label>
    </ligand>
</feature>
<feature type="binding site" evidence="1">
    <location>
        <position position="24"/>
    </location>
    <ligand>
        <name>a divalent metal cation</name>
        <dbReference type="ChEBI" id="CHEBI:60240"/>
        <label>1</label>
    </ligand>
</feature>
<feature type="binding site" evidence="1">
    <location>
        <position position="169"/>
    </location>
    <ligand>
        <name>a divalent metal cation</name>
        <dbReference type="ChEBI" id="CHEBI:60240"/>
        <label>1</label>
    </ligand>
</feature>
<feature type="binding site" evidence="1">
    <location>
        <position position="169"/>
    </location>
    <ligand>
        <name>a divalent metal cation</name>
        <dbReference type="ChEBI" id="CHEBI:60240"/>
        <label>2</label>
    </ligand>
</feature>
<feature type="binding site" evidence="1">
    <location>
        <position position="201"/>
    </location>
    <ligand>
        <name>a divalent metal cation</name>
        <dbReference type="ChEBI" id="CHEBI:60240"/>
        <label>2</label>
    </ligand>
</feature>
<feature type="binding site" evidence="1">
    <location>
        <position position="230"/>
    </location>
    <ligand>
        <name>a divalent metal cation</name>
        <dbReference type="ChEBI" id="CHEBI:60240"/>
        <label>2</label>
    </ligand>
</feature>
<feature type="binding site" evidence="1">
    <location>
        <position position="298"/>
    </location>
    <ligand>
        <name>a divalent metal cation</name>
        <dbReference type="ChEBI" id="CHEBI:60240"/>
        <label>1</label>
    </ligand>
</feature>
<sequence>MSRVQTVLGSITPNLLGRTLTHEHVALDFEHFYKPPPADFENELRQKIKMSTLGYVRLYPYSSRENLRFNDEEALEAVRQDVLLYKKHGGGAIVENSTYGLKPNLEFIVDLAKTTGVHFIAGTGHYIHATQDATHRNLTVEQMTDMYSKDILTGIDVNGRIVKCGFIGEVASVYPVQEFERHALLAAGEIQEVLGCGVSLHPHRVSKAPFEIMRLYLEAGGRANKCVMSHLDRTIFDMDELLEFAKLGCYLQYDLFGTESSYYQLNATVDMISDGQRIENIMKLINEGLVDRLLMSHDIHTKHRLTSYGGHGYHHIHMNILPRMFQRGVTLEQVEQMTVTNPANWLSFNA</sequence>